<reference key="1">
    <citation type="journal article" date="2001" name="Nature">
        <title>Genome sequence and gene compaction of the eukaryote parasite Encephalitozoon cuniculi.</title>
        <authorList>
            <person name="Katinka M.D."/>
            <person name="Duprat S."/>
            <person name="Cornillot E."/>
            <person name="Metenier G."/>
            <person name="Thomarat F."/>
            <person name="Prensier G."/>
            <person name="Barbe V."/>
            <person name="Peyretaillade E."/>
            <person name="Brottier P."/>
            <person name="Wincker P."/>
            <person name="Delbac F."/>
            <person name="El Alaoui H."/>
            <person name="Peyret P."/>
            <person name="Saurin W."/>
            <person name="Gouy M."/>
            <person name="Weissenbach J."/>
            <person name="Vivares C.P."/>
        </authorList>
    </citation>
    <scope>NUCLEOTIDE SEQUENCE [LARGE SCALE GENOMIC DNA]</scope>
    <source>
        <strain>GB-M1</strain>
    </source>
</reference>
<reference key="2">
    <citation type="journal article" date="2006" name="Proteomics">
        <title>Proteomic analysis of the eukaryotic parasite Encephalitozoon cuniculi (microsporidia): a reference map for proteins expressed in late sporogonial stages.</title>
        <authorList>
            <person name="Brosson D."/>
            <person name="Kuhn L."/>
            <person name="Delbac F."/>
            <person name="Garin J."/>
            <person name="Vivares C.P."/>
            <person name="Texier C."/>
        </authorList>
    </citation>
    <scope>IDENTIFICATION BY MASS SPECTROMETRY [LARGE SCALE ANALYSIS]</scope>
    <scope>DEVELOPMENTAL STAGE</scope>
</reference>
<proteinExistence type="evidence at protein level"/>
<name>AMPL_ENCCU</name>
<comment type="function">
    <text evidence="1">Presumably involved in the processing and regular turnover of intracellular proteins. Catalyzes the removal of unsubstituted N-terminal amino acids from various peptides (By similarity).</text>
</comment>
<comment type="catalytic activity">
    <reaction>
        <text>Release of an N-terminal amino acid, Xaa-|-Yaa-, in which Xaa is preferably Leu, but may be other amino acids including Pro although not Arg or Lys, and Yaa may be Pro. Amino acid amides and methyl esters are also readily hydrolyzed, but rates on arylamides are exceedingly low.</text>
        <dbReference type="EC" id="3.4.11.1"/>
    </reaction>
</comment>
<comment type="catalytic activity">
    <reaction>
        <text>Release of N-terminal proline from a peptide.</text>
        <dbReference type="EC" id="3.4.11.5"/>
    </reaction>
</comment>
<comment type="cofactor">
    <cofactor evidence="1">
        <name>Zn(2+)</name>
        <dbReference type="ChEBI" id="CHEBI:29105"/>
    </cofactor>
    <text evidence="1">Binds 2 Zn(2+) ions per subunit.</text>
</comment>
<comment type="subunit">
    <text evidence="1">Homohexamer.</text>
</comment>
<comment type="subcellular location">
    <subcellularLocation>
        <location evidence="1">Cytoplasm</location>
    </subcellularLocation>
</comment>
<comment type="developmental stage">
    <text evidence="2">Expressed in late sporogonial stages.</text>
</comment>
<comment type="similarity">
    <text evidence="3">Belongs to the peptidase M17 family.</text>
</comment>
<organism>
    <name type="scientific">Encephalitozoon cuniculi (strain GB-M1)</name>
    <name type="common">Microsporidian parasite</name>
    <dbReference type="NCBI Taxonomy" id="284813"/>
    <lineage>
        <taxon>Eukaryota</taxon>
        <taxon>Fungi</taxon>
        <taxon>Fungi incertae sedis</taxon>
        <taxon>Microsporidia</taxon>
        <taxon>Unikaryonidae</taxon>
        <taxon>Encephalitozoon</taxon>
    </lineage>
</organism>
<feature type="chain" id="PRO_0000383106" description="Cytosol aminopeptidase">
    <location>
        <begin position="1"/>
        <end position="486"/>
    </location>
</feature>
<feature type="active site" evidence="1">
    <location>
        <position position="261"/>
    </location>
</feature>
<feature type="active site" evidence="1">
    <location>
        <position position="335"/>
    </location>
</feature>
<feature type="binding site" evidence="1">
    <location>
        <position position="249"/>
    </location>
    <ligand>
        <name>Zn(2+)</name>
        <dbReference type="ChEBI" id="CHEBI:29105"/>
        <label>2</label>
    </ligand>
</feature>
<feature type="binding site" evidence="1">
    <location>
        <position position="254"/>
    </location>
    <ligand>
        <name>Zn(2+)</name>
        <dbReference type="ChEBI" id="CHEBI:29105"/>
        <label>1</label>
    </ligand>
</feature>
<feature type="binding site" evidence="1">
    <location>
        <position position="254"/>
    </location>
    <ligand>
        <name>Zn(2+)</name>
        <dbReference type="ChEBI" id="CHEBI:29105"/>
        <label>2</label>
    </ligand>
</feature>
<feature type="binding site" evidence="1">
    <location>
        <position position="272"/>
    </location>
    <ligand>
        <name>Zn(2+)</name>
        <dbReference type="ChEBI" id="CHEBI:29105"/>
        <label>2</label>
    </ligand>
</feature>
<feature type="binding site" evidence="1">
    <location>
        <position position="331"/>
    </location>
    <ligand>
        <name>Zn(2+)</name>
        <dbReference type="ChEBI" id="CHEBI:29105"/>
        <label>1</label>
    </ligand>
</feature>
<feature type="binding site" evidence="1">
    <location>
        <position position="333"/>
    </location>
    <ligand>
        <name>Zn(2+)</name>
        <dbReference type="ChEBI" id="CHEBI:29105"/>
        <label>1</label>
    </ligand>
</feature>
<feature type="binding site" evidence="1">
    <location>
        <position position="333"/>
    </location>
    <ligand>
        <name>Zn(2+)</name>
        <dbReference type="ChEBI" id="CHEBI:29105"/>
        <label>2</label>
    </ligand>
</feature>
<gene>
    <name type="ordered locus">ECU10_1770i</name>
</gene>
<keyword id="KW-0031">Aminopeptidase</keyword>
<keyword id="KW-0963">Cytoplasm</keyword>
<keyword id="KW-0378">Hydrolase</keyword>
<keyword id="KW-0479">Metal-binding</keyword>
<keyword id="KW-0645">Protease</keyword>
<keyword id="KW-1185">Reference proteome</keyword>
<keyword id="KW-0862">Zinc</keyword>
<dbReference type="EC" id="3.4.11.1"/>
<dbReference type="EC" id="3.4.11.5"/>
<dbReference type="EMBL" id="AL590449">
    <property type="protein sequence ID" value="CAD25898.1"/>
    <property type="molecule type" value="Genomic_DNA"/>
</dbReference>
<dbReference type="RefSeq" id="NP_586294.1">
    <property type="nucleotide sequence ID" value="NM_001042127.1"/>
</dbReference>
<dbReference type="SMR" id="Q8SQZ7"/>
<dbReference type="FunCoup" id="Q8SQZ7">
    <property type="interactions" value="98"/>
</dbReference>
<dbReference type="STRING" id="284813.Q8SQZ7"/>
<dbReference type="GeneID" id="859945"/>
<dbReference type="KEGG" id="ecu:ECU10_1770i"/>
<dbReference type="VEuPathDB" id="MicrosporidiaDB:ECU10_1770i"/>
<dbReference type="HOGENOM" id="CLU_013734_6_0_1"/>
<dbReference type="InParanoid" id="Q8SQZ7"/>
<dbReference type="OMA" id="WPMPLPE"/>
<dbReference type="OrthoDB" id="412814at2759"/>
<dbReference type="Proteomes" id="UP000000819">
    <property type="component" value="Chromosome X"/>
</dbReference>
<dbReference type="GO" id="GO:0005737">
    <property type="term" value="C:cytoplasm"/>
    <property type="evidence" value="ECO:0007669"/>
    <property type="project" value="UniProtKB-SubCell"/>
</dbReference>
<dbReference type="GO" id="GO:0030145">
    <property type="term" value="F:manganese ion binding"/>
    <property type="evidence" value="ECO:0007669"/>
    <property type="project" value="InterPro"/>
</dbReference>
<dbReference type="GO" id="GO:0070006">
    <property type="term" value="F:metalloaminopeptidase activity"/>
    <property type="evidence" value="ECO:0007669"/>
    <property type="project" value="InterPro"/>
</dbReference>
<dbReference type="GO" id="GO:0006508">
    <property type="term" value="P:proteolysis"/>
    <property type="evidence" value="ECO:0007669"/>
    <property type="project" value="UniProtKB-KW"/>
</dbReference>
<dbReference type="CDD" id="cd00433">
    <property type="entry name" value="Peptidase_M17"/>
    <property type="match status" value="1"/>
</dbReference>
<dbReference type="Gene3D" id="3.40.220.10">
    <property type="entry name" value="Leucine Aminopeptidase, subunit E, domain 1"/>
    <property type="match status" value="1"/>
</dbReference>
<dbReference type="Gene3D" id="3.40.630.10">
    <property type="entry name" value="Zn peptidases"/>
    <property type="match status" value="1"/>
</dbReference>
<dbReference type="HAMAP" id="MF_00181">
    <property type="entry name" value="Cytosol_peptidase_M17"/>
    <property type="match status" value="1"/>
</dbReference>
<dbReference type="InterPro" id="IPR011356">
    <property type="entry name" value="Leucine_aapep/pepB"/>
</dbReference>
<dbReference type="InterPro" id="IPR043472">
    <property type="entry name" value="Macro_dom-like"/>
</dbReference>
<dbReference type="InterPro" id="IPR000819">
    <property type="entry name" value="Peptidase_M17_C"/>
</dbReference>
<dbReference type="InterPro" id="IPR023042">
    <property type="entry name" value="Peptidase_M17_leu_NH2_pept"/>
</dbReference>
<dbReference type="InterPro" id="IPR008283">
    <property type="entry name" value="Peptidase_M17_N"/>
</dbReference>
<dbReference type="PANTHER" id="PTHR11963:SF23">
    <property type="entry name" value="CYTOSOL AMINOPEPTIDASE"/>
    <property type="match status" value="1"/>
</dbReference>
<dbReference type="PANTHER" id="PTHR11963">
    <property type="entry name" value="LEUCINE AMINOPEPTIDASE-RELATED"/>
    <property type="match status" value="1"/>
</dbReference>
<dbReference type="Pfam" id="PF00883">
    <property type="entry name" value="Peptidase_M17"/>
    <property type="match status" value="1"/>
</dbReference>
<dbReference type="Pfam" id="PF02789">
    <property type="entry name" value="Peptidase_M17_N"/>
    <property type="match status" value="1"/>
</dbReference>
<dbReference type="PRINTS" id="PR00481">
    <property type="entry name" value="LAMNOPPTDASE"/>
</dbReference>
<dbReference type="SUPFAM" id="SSF52949">
    <property type="entry name" value="Macro domain-like"/>
    <property type="match status" value="1"/>
</dbReference>
<dbReference type="SUPFAM" id="SSF53187">
    <property type="entry name" value="Zn-dependent exopeptidases"/>
    <property type="match status" value="1"/>
</dbReference>
<dbReference type="PROSITE" id="PS00631">
    <property type="entry name" value="CYTOSOL_AP"/>
    <property type="match status" value="1"/>
</dbReference>
<protein>
    <recommendedName>
        <fullName>Cytosol aminopeptidase</fullName>
        <ecNumber>3.4.11.1</ecNumber>
    </recommendedName>
    <alternativeName>
        <fullName>Leucine aminopeptidase</fullName>
        <shortName>LAP</shortName>
    </alternativeName>
    <alternativeName>
        <fullName>Leucyl aminopeptidase</fullName>
    </alternativeName>
    <alternativeName>
        <fullName>Proline aminopeptidase</fullName>
        <ecNumber>3.4.11.5</ecNumber>
    </alternativeName>
    <alternativeName>
        <fullName>Prolyl aminopeptidase</fullName>
    </alternativeName>
</protein>
<accession>Q8SQZ7</accession>
<sequence>MELLSYEKLMIGDELNKDSVKVRIVLCSNSKEGVGIMADEKSPGHQNFLSRLDAKGHVGEAYVLLEGNGEVTVFVGIGNVEEDILLVKNNARKAGASAYKCVSQFKNMEMSLTSEYMAREVVSGIMLASYKYRFLHKEKDEPSKKIAINSQSHAVKKAVVVGNAQNFARFLGDTPANLMNPTLFVEYATKYLQDKKNVTFEVFDKSFMERKSMNLLLGVSQGSAQEPKLLVARYRGKSGDAVDIALVGKGVCFDSGGISLKPSARMHRMKGDMLGAASVLSVFGLAADMGIKINMNLVIPLVENLPSGTATKPGDVHVGMNGKSVEINNTDAEGRLILADALVYAQEANPTYIVDVATLTGAMMIALGDAFIGYFTADDDLSKIIHQSGIDANDPVWRMPLSQLYLPSMKSNVADLKNAVEGGHGGSATAAIFLSEFVGKEFKWAHFDIAGVMDSNNNKGVYGDGATGCGVPVLIEMIEKLSTIIN</sequence>
<evidence type="ECO:0000250" key="1"/>
<evidence type="ECO:0000269" key="2">
    <source>
    </source>
</evidence>
<evidence type="ECO:0000305" key="3"/>